<reference key="1">
    <citation type="journal article" date="2002" name="Nature">
        <title>The genome sequence of Schizosaccharomyces pombe.</title>
        <authorList>
            <person name="Wood V."/>
            <person name="Gwilliam R."/>
            <person name="Rajandream M.A."/>
            <person name="Lyne M.H."/>
            <person name="Lyne R."/>
            <person name="Stewart A."/>
            <person name="Sgouros J.G."/>
            <person name="Peat N."/>
            <person name="Hayles J."/>
            <person name="Baker S.G."/>
            <person name="Basham D."/>
            <person name="Bowman S."/>
            <person name="Brooks K."/>
            <person name="Brown D."/>
            <person name="Brown S."/>
            <person name="Chillingworth T."/>
            <person name="Churcher C.M."/>
            <person name="Collins M."/>
            <person name="Connor R."/>
            <person name="Cronin A."/>
            <person name="Davis P."/>
            <person name="Feltwell T."/>
            <person name="Fraser A."/>
            <person name="Gentles S."/>
            <person name="Goble A."/>
            <person name="Hamlin N."/>
            <person name="Harris D.E."/>
            <person name="Hidalgo J."/>
            <person name="Hodgson G."/>
            <person name="Holroyd S."/>
            <person name="Hornsby T."/>
            <person name="Howarth S."/>
            <person name="Huckle E.J."/>
            <person name="Hunt S."/>
            <person name="Jagels K."/>
            <person name="James K.D."/>
            <person name="Jones L."/>
            <person name="Jones M."/>
            <person name="Leather S."/>
            <person name="McDonald S."/>
            <person name="McLean J."/>
            <person name="Mooney P."/>
            <person name="Moule S."/>
            <person name="Mungall K.L."/>
            <person name="Murphy L.D."/>
            <person name="Niblett D."/>
            <person name="Odell C."/>
            <person name="Oliver K."/>
            <person name="O'Neil S."/>
            <person name="Pearson D."/>
            <person name="Quail M.A."/>
            <person name="Rabbinowitsch E."/>
            <person name="Rutherford K.M."/>
            <person name="Rutter S."/>
            <person name="Saunders D."/>
            <person name="Seeger K."/>
            <person name="Sharp S."/>
            <person name="Skelton J."/>
            <person name="Simmonds M.N."/>
            <person name="Squares R."/>
            <person name="Squares S."/>
            <person name="Stevens K."/>
            <person name="Taylor K."/>
            <person name="Taylor R.G."/>
            <person name="Tivey A."/>
            <person name="Walsh S.V."/>
            <person name="Warren T."/>
            <person name="Whitehead S."/>
            <person name="Woodward J.R."/>
            <person name="Volckaert G."/>
            <person name="Aert R."/>
            <person name="Robben J."/>
            <person name="Grymonprez B."/>
            <person name="Weltjens I."/>
            <person name="Vanstreels E."/>
            <person name="Rieger M."/>
            <person name="Schaefer M."/>
            <person name="Mueller-Auer S."/>
            <person name="Gabel C."/>
            <person name="Fuchs M."/>
            <person name="Duesterhoeft A."/>
            <person name="Fritzc C."/>
            <person name="Holzer E."/>
            <person name="Moestl D."/>
            <person name="Hilbert H."/>
            <person name="Borzym K."/>
            <person name="Langer I."/>
            <person name="Beck A."/>
            <person name="Lehrach H."/>
            <person name="Reinhardt R."/>
            <person name="Pohl T.M."/>
            <person name="Eger P."/>
            <person name="Zimmermann W."/>
            <person name="Wedler H."/>
            <person name="Wambutt R."/>
            <person name="Purnelle B."/>
            <person name="Goffeau A."/>
            <person name="Cadieu E."/>
            <person name="Dreano S."/>
            <person name="Gloux S."/>
            <person name="Lelaure V."/>
            <person name="Mottier S."/>
            <person name="Galibert F."/>
            <person name="Aves S.J."/>
            <person name="Xiang Z."/>
            <person name="Hunt C."/>
            <person name="Moore K."/>
            <person name="Hurst S.M."/>
            <person name="Lucas M."/>
            <person name="Rochet M."/>
            <person name="Gaillardin C."/>
            <person name="Tallada V.A."/>
            <person name="Garzon A."/>
            <person name="Thode G."/>
            <person name="Daga R.R."/>
            <person name="Cruzado L."/>
            <person name="Jimenez J."/>
            <person name="Sanchez M."/>
            <person name="del Rey F."/>
            <person name="Benito J."/>
            <person name="Dominguez A."/>
            <person name="Revuelta J.L."/>
            <person name="Moreno S."/>
            <person name="Armstrong J."/>
            <person name="Forsburg S.L."/>
            <person name="Cerutti L."/>
            <person name="Lowe T."/>
            <person name="McCombie W.R."/>
            <person name="Paulsen I."/>
            <person name="Potashkin J."/>
            <person name="Shpakovski G.V."/>
            <person name="Ussery D."/>
            <person name="Barrell B.G."/>
            <person name="Nurse P."/>
        </authorList>
    </citation>
    <scope>NUCLEOTIDE SEQUENCE [LARGE SCALE GENOMIC DNA]</scope>
    <source>
        <strain>972 / ATCC 24843</strain>
    </source>
</reference>
<comment type="subcellular location">
    <subcellularLocation>
        <location evidence="3">Secreted</location>
    </subcellularLocation>
    <subcellularLocation>
        <location evidence="3">Cell surface</location>
    </subcellularLocation>
</comment>
<dbReference type="EMBL" id="CU329670">
    <property type="protein sequence ID" value="CAD27470.1"/>
    <property type="molecule type" value="Genomic_DNA"/>
</dbReference>
<dbReference type="RefSeq" id="NP_001018272.1">
    <property type="nucleotide sequence ID" value="NM_001019827.2"/>
</dbReference>
<dbReference type="STRING" id="284812.Q8TFG4"/>
<dbReference type="PaxDb" id="4896-SPAPB18E9.04c.1"/>
<dbReference type="EnsemblFungi" id="SPAPB18E9.04c.1">
    <property type="protein sequence ID" value="SPAPB18E9.04c.1:pep"/>
    <property type="gene ID" value="SPAPB18E9.04c"/>
</dbReference>
<dbReference type="KEGG" id="spo:3361427"/>
<dbReference type="PomBase" id="SPAPB18E9.04c"/>
<dbReference type="VEuPathDB" id="FungiDB:SPAPB18E9.04c"/>
<dbReference type="HOGENOM" id="CLU_351658_0_0_1"/>
<dbReference type="InParanoid" id="Q8TFG4"/>
<dbReference type="OMA" id="DTVYPTD"/>
<dbReference type="PRO" id="PR:Q8TFG4"/>
<dbReference type="Proteomes" id="UP000002485">
    <property type="component" value="Chromosome I"/>
</dbReference>
<dbReference type="GO" id="GO:0009986">
    <property type="term" value="C:cell surface"/>
    <property type="evidence" value="ECO:0000303"/>
    <property type="project" value="PomBase"/>
</dbReference>
<dbReference type="GO" id="GO:0005576">
    <property type="term" value="C:extracellular region"/>
    <property type="evidence" value="ECO:0007669"/>
    <property type="project" value="UniProtKB-SubCell"/>
</dbReference>
<organism>
    <name type="scientific">Schizosaccharomyces pombe (strain 972 / ATCC 24843)</name>
    <name type="common">Fission yeast</name>
    <dbReference type="NCBI Taxonomy" id="284812"/>
    <lineage>
        <taxon>Eukaryota</taxon>
        <taxon>Fungi</taxon>
        <taxon>Dikarya</taxon>
        <taxon>Ascomycota</taxon>
        <taxon>Taphrinomycotina</taxon>
        <taxon>Schizosaccharomycetes</taxon>
        <taxon>Schizosaccharomycetales</taxon>
        <taxon>Schizosaccharomycetaceae</taxon>
        <taxon>Schizosaccharomyces</taxon>
    </lineage>
</organism>
<protein>
    <recommendedName>
        <fullName>Uncharacterized protein PB18E9.04c</fullName>
    </recommendedName>
</protein>
<evidence type="ECO:0000255" key="1"/>
<evidence type="ECO:0000256" key="2">
    <source>
        <dbReference type="SAM" id="MobiDB-lite"/>
    </source>
</evidence>
<evidence type="ECO:0000305" key="3"/>
<sequence length="800" mass="79352">MNRFFISTLLLLAQHLAPAAASCGLANEASLSANEVQDIYHDFVATSINYADLLKRNEDLNASLSTGSPVEITSTSCTTDTSASTPIITESTSSTSSASTTGSSSSPLPSTSTSCTTSTSIPPTGGSSSLSTPITPTVPPTSTSSTSIPIPPTSTSSTDTNSNPLPTTSTSCTTSTSIPPTGGSSSLSTPITPTVPPTSTSSTSIPIPPTSTSSTDTNSSPLPTTSTSCTTSTSIPTGGSSSLSTPITPTVPPTSTSSTSIPIPPTSTSSTDTNSSPLPTTSTSCTTSTSIPPTGNSTTPVTPTVPPTSTSSTSTPPPPASTSSTGTSSSPLPSTSTSCTTSTSIPPTGNSTTPVTPTVPPTSTSSTSTPPPPASTSSTGTSSSPLLSTSTSCTTSTSIPPTGNSTTPVTPTVPPTSSSTPLTTTNCTTSTSVPYTSTPVTSTPLATTNCTTSTSVPYTSTPVTSTPLTTTNCTTSTSIPYTSTPVTSTPLTTTNCTTSTSVPYTSTPVTSSNYTISSSTPVTSTPVTTTNCTTSTSVLYTSTPVTSTPLATTNCTTSTSVPYTSTPVTSSNYTISSSTPVTSTPVTTTNCTTSTSVLYTSTPITSPNSTSSSSTQVSWNSTTPITGTSTSKVTSSTSIPLTSTNRTSTTFTSSTSISTSSSSTATSSTSFASESSSFYSNVTTSSSTVSTPPPTTSFPSTFTTSFITSSSLSSIPNNSTEVKTASTSSGTEIKTASTSSGSSSSSSYTPASSTSTTTSSVSSRQSSSSSSFTPSSAISTAKSSFVLSTLSILIALYMVA</sequence>
<accession>Q8TFG4</accession>
<gene>
    <name type="ORF">SPAPB18E9.04c</name>
</gene>
<proteinExistence type="inferred from homology"/>
<keyword id="KW-1185">Reference proteome</keyword>
<keyword id="KW-0964">Secreted</keyword>
<keyword id="KW-0732">Signal</keyword>
<name>YL54_SCHPO</name>
<feature type="signal peptide" evidence="1">
    <location>
        <begin position="1"/>
        <end position="21"/>
    </location>
</feature>
<feature type="chain" id="PRO_0000304075" description="Uncharacterized protein PB18E9.04c">
    <location>
        <begin position="22"/>
        <end position="800"/>
    </location>
</feature>
<feature type="region of interest" description="Disordered" evidence="2">
    <location>
        <begin position="63"/>
        <end position="470"/>
    </location>
</feature>
<feature type="region of interest" description="Disordered" evidence="2">
    <location>
        <begin position="602"/>
        <end position="670"/>
    </location>
</feature>
<feature type="region of interest" description="Disordered" evidence="2">
    <location>
        <begin position="710"/>
        <end position="776"/>
    </location>
</feature>
<feature type="compositionally biased region" description="Polar residues" evidence="2">
    <location>
        <begin position="63"/>
        <end position="72"/>
    </location>
</feature>
<feature type="compositionally biased region" description="Low complexity" evidence="2">
    <location>
        <begin position="73"/>
        <end position="314"/>
    </location>
</feature>
<feature type="compositionally biased region" description="Low complexity" evidence="2">
    <location>
        <begin position="321"/>
        <end position="368"/>
    </location>
</feature>
<feature type="compositionally biased region" description="Low complexity" evidence="2">
    <location>
        <begin position="375"/>
        <end position="444"/>
    </location>
</feature>
<feature type="compositionally biased region" description="Low complexity" evidence="2">
    <location>
        <begin position="451"/>
        <end position="470"/>
    </location>
</feature>
<feature type="compositionally biased region" description="Low complexity" evidence="2">
    <location>
        <begin position="710"/>
        <end position="720"/>
    </location>
</feature>
<feature type="compositionally biased region" description="Polar residues" evidence="2">
    <location>
        <begin position="721"/>
        <end position="734"/>
    </location>
</feature>
<feature type="compositionally biased region" description="Low complexity" evidence="2">
    <location>
        <begin position="735"/>
        <end position="776"/>
    </location>
</feature>